<accession>B0VLB6</accession>
<organism>
    <name type="scientific">Acinetobacter baumannii (strain SDF)</name>
    <dbReference type="NCBI Taxonomy" id="509170"/>
    <lineage>
        <taxon>Bacteria</taxon>
        <taxon>Pseudomonadati</taxon>
        <taxon>Pseudomonadota</taxon>
        <taxon>Gammaproteobacteria</taxon>
        <taxon>Moraxellales</taxon>
        <taxon>Moraxellaceae</taxon>
        <taxon>Acinetobacter</taxon>
        <taxon>Acinetobacter calcoaceticus/baumannii complex</taxon>
    </lineage>
</organism>
<proteinExistence type="inferred from homology"/>
<comment type="function">
    <text evidence="1">Accelerates the degradation of transcripts by removing pyrophosphate from the 5'-end of triphosphorylated RNA, leading to a more labile monophosphorylated state that can stimulate subsequent ribonuclease cleavage.</text>
</comment>
<comment type="cofactor">
    <cofactor evidence="1">
        <name>a divalent metal cation</name>
        <dbReference type="ChEBI" id="CHEBI:60240"/>
    </cofactor>
</comment>
<comment type="similarity">
    <text evidence="1">Belongs to the Nudix hydrolase family. RppH subfamily.</text>
</comment>
<protein>
    <recommendedName>
        <fullName evidence="1">RNA pyrophosphohydrolase</fullName>
        <ecNumber evidence="1">3.6.1.-</ecNumber>
    </recommendedName>
    <alternativeName>
        <fullName evidence="1">(Di)nucleoside polyphosphate hydrolase</fullName>
    </alternativeName>
</protein>
<evidence type="ECO:0000255" key="1">
    <source>
        <dbReference type="HAMAP-Rule" id="MF_00298"/>
    </source>
</evidence>
<reference key="1">
    <citation type="journal article" date="2008" name="PLoS ONE">
        <title>Comparative analysis of Acinetobacters: three genomes for three lifestyles.</title>
        <authorList>
            <person name="Vallenet D."/>
            <person name="Nordmann P."/>
            <person name="Barbe V."/>
            <person name="Poirel L."/>
            <person name="Mangenot S."/>
            <person name="Bataille E."/>
            <person name="Dossat C."/>
            <person name="Gas S."/>
            <person name="Kreimeyer A."/>
            <person name="Lenoble P."/>
            <person name="Oztas S."/>
            <person name="Poulain J."/>
            <person name="Segurens B."/>
            <person name="Robert C."/>
            <person name="Abergel C."/>
            <person name="Claverie J.-M."/>
            <person name="Raoult D."/>
            <person name="Medigue C."/>
            <person name="Weissenbach J."/>
            <person name="Cruveiller S."/>
        </authorList>
    </citation>
    <scope>NUCLEOTIDE SEQUENCE [LARGE SCALE GENOMIC DNA]</scope>
    <source>
        <strain>SDF</strain>
    </source>
</reference>
<keyword id="KW-0378">Hydrolase</keyword>
<name>RPPH_ACIBS</name>
<dbReference type="EC" id="3.6.1.-" evidence="1"/>
<dbReference type="EMBL" id="CU468230">
    <property type="protein sequence ID" value="CAP02384.1"/>
    <property type="molecule type" value="Genomic_DNA"/>
</dbReference>
<dbReference type="SMR" id="B0VLB6"/>
<dbReference type="KEGG" id="abm:ABSDF3102"/>
<dbReference type="HOGENOM" id="CLU_087195_3_1_6"/>
<dbReference type="Proteomes" id="UP000001741">
    <property type="component" value="Chromosome"/>
</dbReference>
<dbReference type="GO" id="GO:0016462">
    <property type="term" value="F:pyrophosphatase activity"/>
    <property type="evidence" value="ECO:0007669"/>
    <property type="project" value="UniProtKB-ARBA"/>
</dbReference>
<dbReference type="CDD" id="cd03671">
    <property type="entry name" value="NUDIX_Ap4A_hydrolase_plant_like"/>
    <property type="match status" value="1"/>
</dbReference>
<dbReference type="FunFam" id="3.90.79.10:FF:000001">
    <property type="entry name" value="RNA pyrophosphohydrolase"/>
    <property type="match status" value="1"/>
</dbReference>
<dbReference type="Gene3D" id="3.90.79.10">
    <property type="entry name" value="Nucleoside Triphosphate Pyrophosphohydrolase"/>
    <property type="match status" value="1"/>
</dbReference>
<dbReference type="HAMAP" id="MF_00298">
    <property type="entry name" value="Nudix_RppH"/>
    <property type="match status" value="1"/>
</dbReference>
<dbReference type="InterPro" id="IPR020476">
    <property type="entry name" value="Nudix_hydrolase"/>
</dbReference>
<dbReference type="InterPro" id="IPR015797">
    <property type="entry name" value="NUDIX_hydrolase-like_dom_sf"/>
</dbReference>
<dbReference type="InterPro" id="IPR020084">
    <property type="entry name" value="NUDIX_hydrolase_CS"/>
</dbReference>
<dbReference type="InterPro" id="IPR000086">
    <property type="entry name" value="NUDIX_hydrolase_dom"/>
</dbReference>
<dbReference type="InterPro" id="IPR022927">
    <property type="entry name" value="RppH"/>
</dbReference>
<dbReference type="NCBIfam" id="NF001934">
    <property type="entry name" value="PRK00714.1-1"/>
    <property type="match status" value="1"/>
</dbReference>
<dbReference type="NCBIfam" id="NF001937">
    <property type="entry name" value="PRK00714.1-4"/>
    <property type="match status" value="1"/>
</dbReference>
<dbReference type="NCBIfam" id="NF001938">
    <property type="entry name" value="PRK00714.1-5"/>
    <property type="match status" value="1"/>
</dbReference>
<dbReference type="PANTHER" id="PTHR43736">
    <property type="entry name" value="ADP-RIBOSE PYROPHOSPHATASE"/>
    <property type="match status" value="1"/>
</dbReference>
<dbReference type="PANTHER" id="PTHR43736:SF1">
    <property type="entry name" value="DIHYDRONEOPTERIN TRIPHOSPHATE DIPHOSPHATASE"/>
    <property type="match status" value="1"/>
</dbReference>
<dbReference type="Pfam" id="PF00293">
    <property type="entry name" value="NUDIX"/>
    <property type="match status" value="1"/>
</dbReference>
<dbReference type="PRINTS" id="PR00502">
    <property type="entry name" value="NUDIXFAMILY"/>
</dbReference>
<dbReference type="SUPFAM" id="SSF55811">
    <property type="entry name" value="Nudix"/>
    <property type="match status" value="1"/>
</dbReference>
<dbReference type="PROSITE" id="PS51462">
    <property type="entry name" value="NUDIX"/>
    <property type="match status" value="1"/>
</dbReference>
<dbReference type="PROSITE" id="PS00893">
    <property type="entry name" value="NUDIX_BOX"/>
    <property type="match status" value="1"/>
</dbReference>
<gene>
    <name evidence="1" type="primary">rppH</name>
    <name evidence="1" type="synonym">nudH</name>
    <name type="ordered locus">ABSDF3102</name>
</gene>
<sequence length="161" mass="18799">MIDSEGFRPNVGIILANDDGQVLWAKRIGHNAWQFPQGGIQFGETPEQALFRELREEIGLLPEHVQIIAQTKGWLRYRLPHRYIRSDSDPVCIGQKQKWFLLKLTAPAKNIQLNLADPPEFDEWQWVSYWYPLGQVVNFKRDVYRKAMVELCTQLPVQQLP</sequence>
<feature type="chain" id="PRO_1000115259" description="RNA pyrophosphohydrolase">
    <location>
        <begin position="1"/>
        <end position="161"/>
    </location>
</feature>
<feature type="domain" description="Nudix hydrolase" evidence="1">
    <location>
        <begin position="6"/>
        <end position="149"/>
    </location>
</feature>
<feature type="short sequence motif" description="Nudix box">
    <location>
        <begin position="38"/>
        <end position="59"/>
    </location>
</feature>